<feature type="chain" id="PRO_0000119609" description="Glutamate--tRNA ligase">
    <location>
        <begin position="1"/>
        <end position="468"/>
    </location>
</feature>
<feature type="short sequence motif" description="'HIGH' region" evidence="1">
    <location>
        <begin position="10"/>
        <end position="20"/>
    </location>
</feature>
<feature type="short sequence motif" description="'KMSKS' region" evidence="1">
    <location>
        <begin position="252"/>
        <end position="256"/>
    </location>
</feature>
<feature type="binding site" evidence="1">
    <location>
        <position position="255"/>
    </location>
    <ligand>
        <name>ATP</name>
        <dbReference type="ChEBI" id="CHEBI:30616"/>
    </ligand>
</feature>
<proteinExistence type="inferred from homology"/>
<sequence>MKKLRTRYAPSPTGYLHIGGARTALFNYLLAKHYNGDFIIRIEDTDVKRNIADGEASQIENLKWLNIEANESPLKPNEKYGPYRQSQKLEKYLKIAHELIEKGYAYKAYDNSEELEEQKKHSEKLGVASFRYQRDFLKISEEEKQKRDASGAYSIRVICPKNTTYQWDDLVRGNIAVNSNDIGDWIIIKSDDYPTYNFAVVIDDIDMEISHILRGEEHITNTPKQMMIYDYLNAPKPLFGHLTIITNMEGKKLSKRDLSLKQFIHEYKEEGYNSQAIFNFLTLLGWTDEKARELMDHDEIIKSFLYTRLSKSPSKFDITKMQWFSKQYWKNTPNEELIKILNLNDYDNDWINLFLDLYKENIYSLNQLKNYLKIYKQANLNQEKDLDLNDAEKNVVKSFSSYIDYSNFSVNQIQEAINKTQEKLSIKGKNLFLPIRKATTFQEHGPELAKAIYLFGSEIIEKRMKKWK</sequence>
<organism>
    <name type="scientific">Mycoplasmopsis pulmonis (strain UAB CTIP)</name>
    <name type="common">Mycoplasma pulmonis</name>
    <dbReference type="NCBI Taxonomy" id="272635"/>
    <lineage>
        <taxon>Bacteria</taxon>
        <taxon>Bacillati</taxon>
        <taxon>Mycoplasmatota</taxon>
        <taxon>Mycoplasmoidales</taxon>
        <taxon>Metamycoplasmataceae</taxon>
        <taxon>Mycoplasmopsis</taxon>
    </lineage>
</organism>
<keyword id="KW-0030">Aminoacyl-tRNA synthetase</keyword>
<keyword id="KW-0067">ATP-binding</keyword>
<keyword id="KW-0963">Cytoplasm</keyword>
<keyword id="KW-0436">Ligase</keyword>
<keyword id="KW-0547">Nucleotide-binding</keyword>
<keyword id="KW-0648">Protein biosynthesis</keyword>
<keyword id="KW-1185">Reference proteome</keyword>
<reference key="1">
    <citation type="journal article" date="1994" name="Mol. Microbiol.">
        <title>Regulation of a restriction and modification system via DNA inversion in Mycoplasma pulmonis.</title>
        <authorList>
            <person name="Dybvig K."/>
            <person name="Yu H."/>
        </authorList>
    </citation>
    <scope>NUCLEOTIDE SEQUENCE [GENOMIC DNA]</scope>
    <source>
        <strain>KD735-16</strain>
    </source>
</reference>
<reference key="2">
    <citation type="journal article" date="2001" name="Nucleic Acids Res.">
        <title>The complete genome sequence of the murine respiratory pathogen Mycoplasma pulmonis.</title>
        <authorList>
            <person name="Chambaud I."/>
            <person name="Heilig R."/>
            <person name="Ferris S."/>
            <person name="Barbe V."/>
            <person name="Samson D."/>
            <person name="Galisson F."/>
            <person name="Moszer I."/>
            <person name="Dybvig K."/>
            <person name="Wroblewski H."/>
            <person name="Viari A."/>
            <person name="Rocha E.P.C."/>
            <person name="Blanchard A."/>
        </authorList>
    </citation>
    <scope>NUCLEOTIDE SEQUENCE [LARGE SCALE GENOMIC DNA]</scope>
    <source>
        <strain>UAB CTIP</strain>
    </source>
</reference>
<protein>
    <recommendedName>
        <fullName evidence="1">Glutamate--tRNA ligase</fullName>
        <ecNumber evidence="1">6.1.1.17</ecNumber>
    </recommendedName>
    <alternativeName>
        <fullName evidence="1">Glutamyl-tRNA synthetase</fullName>
        <shortName evidence="1">GluRS</shortName>
    </alternativeName>
</protein>
<evidence type="ECO:0000255" key="1">
    <source>
        <dbReference type="HAMAP-Rule" id="MF_00022"/>
    </source>
</evidence>
<name>SYE_MYCPU</name>
<accession>P53662</accession>
<comment type="function">
    <text evidence="1">Catalyzes the attachment of glutamate to tRNA(Glu) in a two-step reaction: glutamate is first activated by ATP to form Glu-AMP and then transferred to the acceptor end of tRNA(Glu).</text>
</comment>
<comment type="catalytic activity">
    <reaction evidence="1">
        <text>tRNA(Glu) + L-glutamate + ATP = L-glutamyl-tRNA(Glu) + AMP + diphosphate</text>
        <dbReference type="Rhea" id="RHEA:23540"/>
        <dbReference type="Rhea" id="RHEA-COMP:9663"/>
        <dbReference type="Rhea" id="RHEA-COMP:9680"/>
        <dbReference type="ChEBI" id="CHEBI:29985"/>
        <dbReference type="ChEBI" id="CHEBI:30616"/>
        <dbReference type="ChEBI" id="CHEBI:33019"/>
        <dbReference type="ChEBI" id="CHEBI:78442"/>
        <dbReference type="ChEBI" id="CHEBI:78520"/>
        <dbReference type="ChEBI" id="CHEBI:456215"/>
        <dbReference type="EC" id="6.1.1.17"/>
    </reaction>
</comment>
<comment type="subunit">
    <text evidence="1">Monomer.</text>
</comment>
<comment type="subcellular location">
    <subcellularLocation>
        <location evidence="1">Cytoplasm</location>
    </subcellularLocation>
</comment>
<comment type="similarity">
    <text evidence="1">Belongs to the class-I aminoacyl-tRNA synthetase family. Glutamate--tRNA ligase type 1 subfamily.</text>
</comment>
<gene>
    <name evidence="1" type="primary">gltX</name>
    <name type="ordered locus">MYPU_6820</name>
</gene>
<dbReference type="EC" id="6.1.1.17" evidence="1"/>
<dbReference type="EMBL" id="L25415">
    <property type="protein sequence ID" value="AAA65629.1"/>
    <property type="molecule type" value="Genomic_DNA"/>
</dbReference>
<dbReference type="EMBL" id="AL445565">
    <property type="protein sequence ID" value="CAC13855.1"/>
    <property type="molecule type" value="Genomic_DNA"/>
</dbReference>
<dbReference type="PIR" id="S49391">
    <property type="entry name" value="S49391"/>
</dbReference>
<dbReference type="RefSeq" id="WP_010925483.1">
    <property type="nucleotide sequence ID" value="NC_002771.1"/>
</dbReference>
<dbReference type="SMR" id="P53662"/>
<dbReference type="STRING" id="272635.gene:17577293"/>
<dbReference type="KEGG" id="mpu:MYPU_6820"/>
<dbReference type="eggNOG" id="COG0008">
    <property type="taxonomic scope" value="Bacteria"/>
</dbReference>
<dbReference type="HOGENOM" id="CLU_015768_6_1_14"/>
<dbReference type="BioCyc" id="MPUL272635:G1GT6-696-MONOMER"/>
<dbReference type="Proteomes" id="UP000000528">
    <property type="component" value="Chromosome"/>
</dbReference>
<dbReference type="GO" id="GO:0005829">
    <property type="term" value="C:cytosol"/>
    <property type="evidence" value="ECO:0007669"/>
    <property type="project" value="TreeGrafter"/>
</dbReference>
<dbReference type="GO" id="GO:0005524">
    <property type="term" value="F:ATP binding"/>
    <property type="evidence" value="ECO:0007669"/>
    <property type="project" value="UniProtKB-UniRule"/>
</dbReference>
<dbReference type="GO" id="GO:0004818">
    <property type="term" value="F:glutamate-tRNA ligase activity"/>
    <property type="evidence" value="ECO:0007669"/>
    <property type="project" value="UniProtKB-UniRule"/>
</dbReference>
<dbReference type="GO" id="GO:0000049">
    <property type="term" value="F:tRNA binding"/>
    <property type="evidence" value="ECO:0007669"/>
    <property type="project" value="InterPro"/>
</dbReference>
<dbReference type="GO" id="GO:0008270">
    <property type="term" value="F:zinc ion binding"/>
    <property type="evidence" value="ECO:0007669"/>
    <property type="project" value="InterPro"/>
</dbReference>
<dbReference type="GO" id="GO:0006424">
    <property type="term" value="P:glutamyl-tRNA aminoacylation"/>
    <property type="evidence" value="ECO:0007669"/>
    <property type="project" value="UniProtKB-UniRule"/>
</dbReference>
<dbReference type="CDD" id="cd00808">
    <property type="entry name" value="GluRS_core"/>
    <property type="match status" value="1"/>
</dbReference>
<dbReference type="FunFam" id="3.40.50.620:FF:000007">
    <property type="entry name" value="Glutamate--tRNA ligase"/>
    <property type="match status" value="1"/>
</dbReference>
<dbReference type="Gene3D" id="1.10.10.350">
    <property type="match status" value="1"/>
</dbReference>
<dbReference type="Gene3D" id="3.40.50.620">
    <property type="entry name" value="HUPs"/>
    <property type="match status" value="1"/>
</dbReference>
<dbReference type="HAMAP" id="MF_00022">
    <property type="entry name" value="Glu_tRNA_synth_type1"/>
    <property type="match status" value="1"/>
</dbReference>
<dbReference type="InterPro" id="IPR045462">
    <property type="entry name" value="aa-tRNA-synth_I_cd-bd"/>
</dbReference>
<dbReference type="InterPro" id="IPR020751">
    <property type="entry name" value="aa-tRNA-synth_I_codon-bd_sub2"/>
</dbReference>
<dbReference type="InterPro" id="IPR001412">
    <property type="entry name" value="aa-tRNA-synth_I_CS"/>
</dbReference>
<dbReference type="InterPro" id="IPR008925">
    <property type="entry name" value="aa_tRNA-synth_I_cd-bd_sf"/>
</dbReference>
<dbReference type="InterPro" id="IPR004527">
    <property type="entry name" value="Glu-tRNA-ligase_bac/mito"/>
</dbReference>
<dbReference type="InterPro" id="IPR000924">
    <property type="entry name" value="Glu/Gln-tRNA-synth"/>
</dbReference>
<dbReference type="InterPro" id="IPR020058">
    <property type="entry name" value="Glu/Gln-tRNA-synth_Ib_cat-dom"/>
</dbReference>
<dbReference type="InterPro" id="IPR049940">
    <property type="entry name" value="GluQ/Sye"/>
</dbReference>
<dbReference type="InterPro" id="IPR033910">
    <property type="entry name" value="GluRS_core"/>
</dbReference>
<dbReference type="InterPro" id="IPR014729">
    <property type="entry name" value="Rossmann-like_a/b/a_fold"/>
</dbReference>
<dbReference type="NCBIfam" id="TIGR00464">
    <property type="entry name" value="gltX_bact"/>
    <property type="match status" value="1"/>
</dbReference>
<dbReference type="PANTHER" id="PTHR43311">
    <property type="entry name" value="GLUTAMATE--TRNA LIGASE"/>
    <property type="match status" value="1"/>
</dbReference>
<dbReference type="PANTHER" id="PTHR43311:SF2">
    <property type="entry name" value="GLUTAMATE--TRNA LIGASE, MITOCHONDRIAL-RELATED"/>
    <property type="match status" value="1"/>
</dbReference>
<dbReference type="Pfam" id="PF19269">
    <property type="entry name" value="Anticodon_2"/>
    <property type="match status" value="1"/>
</dbReference>
<dbReference type="Pfam" id="PF00749">
    <property type="entry name" value="tRNA-synt_1c"/>
    <property type="match status" value="1"/>
</dbReference>
<dbReference type="PRINTS" id="PR00987">
    <property type="entry name" value="TRNASYNTHGLU"/>
</dbReference>
<dbReference type="SUPFAM" id="SSF48163">
    <property type="entry name" value="An anticodon-binding domain of class I aminoacyl-tRNA synthetases"/>
    <property type="match status" value="1"/>
</dbReference>
<dbReference type="SUPFAM" id="SSF52374">
    <property type="entry name" value="Nucleotidylyl transferase"/>
    <property type="match status" value="1"/>
</dbReference>
<dbReference type="PROSITE" id="PS00178">
    <property type="entry name" value="AA_TRNA_LIGASE_I"/>
    <property type="match status" value="1"/>
</dbReference>